<organism>
    <name type="scientific">Bacillus subtilis (strain 168)</name>
    <dbReference type="NCBI Taxonomy" id="224308"/>
    <lineage>
        <taxon>Bacteria</taxon>
        <taxon>Bacillati</taxon>
        <taxon>Bacillota</taxon>
        <taxon>Bacilli</taxon>
        <taxon>Bacillales</taxon>
        <taxon>Bacillaceae</taxon>
        <taxon>Bacillus</taxon>
    </lineage>
</organism>
<proteinExistence type="inferred from homology"/>
<dbReference type="EC" id="3.1.3.-"/>
<dbReference type="EMBL" id="AF012285">
    <property type="protein sequence ID" value="AAC24929.1"/>
    <property type="molecule type" value="Genomic_DNA"/>
</dbReference>
<dbReference type="EMBL" id="AL009126">
    <property type="protein sequence ID" value="CAB13328.1"/>
    <property type="molecule type" value="Genomic_DNA"/>
</dbReference>
<dbReference type="PIR" id="C69862">
    <property type="entry name" value="C69862"/>
</dbReference>
<dbReference type="RefSeq" id="NP_389338.1">
    <property type="nucleotide sequence ID" value="NC_000964.3"/>
</dbReference>
<dbReference type="RefSeq" id="WP_003245153.1">
    <property type="nucleotide sequence ID" value="NZ_OZ025638.1"/>
</dbReference>
<dbReference type="SMR" id="Q45494"/>
<dbReference type="FunCoup" id="Q45494">
    <property type="interactions" value="5"/>
</dbReference>
<dbReference type="STRING" id="224308.BSU14550"/>
<dbReference type="jPOST" id="Q45494"/>
<dbReference type="PaxDb" id="224308-BSU14550"/>
<dbReference type="DNASU" id="939479"/>
<dbReference type="EnsemblBacteria" id="CAB13328">
    <property type="protein sequence ID" value="CAB13328"/>
    <property type="gene ID" value="BSU_14550"/>
</dbReference>
<dbReference type="GeneID" id="939479"/>
<dbReference type="KEGG" id="bsu:BSU14550"/>
<dbReference type="PATRIC" id="fig|224308.179.peg.1586"/>
<dbReference type="eggNOG" id="COG0561">
    <property type="taxonomic scope" value="Bacteria"/>
</dbReference>
<dbReference type="InParanoid" id="Q45494"/>
<dbReference type="OrthoDB" id="9810101at2"/>
<dbReference type="PhylomeDB" id="Q45494"/>
<dbReference type="BioCyc" id="BSUB:BSU14550-MONOMER"/>
<dbReference type="SABIO-RK" id="Q45494"/>
<dbReference type="Proteomes" id="UP000001570">
    <property type="component" value="Chromosome"/>
</dbReference>
<dbReference type="GO" id="GO:0005829">
    <property type="term" value="C:cytosol"/>
    <property type="evidence" value="ECO:0000318"/>
    <property type="project" value="GO_Central"/>
</dbReference>
<dbReference type="GO" id="GO:0000287">
    <property type="term" value="F:magnesium ion binding"/>
    <property type="evidence" value="ECO:0000318"/>
    <property type="project" value="GO_Central"/>
</dbReference>
<dbReference type="GO" id="GO:0016791">
    <property type="term" value="F:phosphatase activity"/>
    <property type="evidence" value="ECO:0000318"/>
    <property type="project" value="GO_Central"/>
</dbReference>
<dbReference type="CDD" id="cd07517">
    <property type="entry name" value="HAD_HPP"/>
    <property type="match status" value="1"/>
</dbReference>
<dbReference type="Gene3D" id="3.30.1240.10">
    <property type="match status" value="1"/>
</dbReference>
<dbReference type="Gene3D" id="3.40.50.1000">
    <property type="entry name" value="HAD superfamily/HAD-like"/>
    <property type="match status" value="1"/>
</dbReference>
<dbReference type="InterPro" id="IPR000150">
    <property type="entry name" value="Cof"/>
</dbReference>
<dbReference type="InterPro" id="IPR036412">
    <property type="entry name" value="HAD-like_sf"/>
</dbReference>
<dbReference type="InterPro" id="IPR006379">
    <property type="entry name" value="HAD-SF_hydro_IIB"/>
</dbReference>
<dbReference type="InterPro" id="IPR023214">
    <property type="entry name" value="HAD_sf"/>
</dbReference>
<dbReference type="NCBIfam" id="TIGR00099">
    <property type="entry name" value="Cof-subfamily"/>
    <property type="match status" value="1"/>
</dbReference>
<dbReference type="NCBIfam" id="TIGR01484">
    <property type="entry name" value="HAD-SF-IIB"/>
    <property type="match status" value="1"/>
</dbReference>
<dbReference type="PANTHER" id="PTHR10000:SF25">
    <property type="entry name" value="PHOSPHATASE YKRA-RELATED"/>
    <property type="match status" value="1"/>
</dbReference>
<dbReference type="PANTHER" id="PTHR10000">
    <property type="entry name" value="PHOSPHOSERINE PHOSPHATASE"/>
    <property type="match status" value="1"/>
</dbReference>
<dbReference type="Pfam" id="PF08282">
    <property type="entry name" value="Hydrolase_3"/>
    <property type="match status" value="1"/>
</dbReference>
<dbReference type="SFLD" id="SFLDG01144">
    <property type="entry name" value="C2.B.4:_PGP_Like"/>
    <property type="match status" value="1"/>
</dbReference>
<dbReference type="SFLD" id="SFLDG01140">
    <property type="entry name" value="C2.B:_Phosphomannomutase_and_P"/>
    <property type="match status" value="1"/>
</dbReference>
<dbReference type="SUPFAM" id="SSF56784">
    <property type="entry name" value="HAD-like"/>
    <property type="match status" value="1"/>
</dbReference>
<dbReference type="PROSITE" id="PS01229">
    <property type="entry name" value="COF_2"/>
    <property type="match status" value="1"/>
</dbReference>
<reference key="1">
    <citation type="submission" date="1997-07" db="EMBL/GenBank/DDBJ databases">
        <title>Sequence analysis of the mobA-ampS region of the Bacillus subtilis chromosome.</title>
        <authorList>
            <person name="Caldwell R.M."/>
            <person name="Ferrari E."/>
        </authorList>
    </citation>
    <scope>NUCLEOTIDE SEQUENCE [GENOMIC DNA]</scope>
    <source>
        <strain>168</strain>
    </source>
</reference>
<reference key="2">
    <citation type="journal article" date="1997" name="Nature">
        <title>The complete genome sequence of the Gram-positive bacterium Bacillus subtilis.</title>
        <authorList>
            <person name="Kunst F."/>
            <person name="Ogasawara N."/>
            <person name="Moszer I."/>
            <person name="Albertini A.M."/>
            <person name="Alloni G."/>
            <person name="Azevedo V."/>
            <person name="Bertero M.G."/>
            <person name="Bessieres P."/>
            <person name="Bolotin A."/>
            <person name="Borchert S."/>
            <person name="Borriss R."/>
            <person name="Boursier L."/>
            <person name="Brans A."/>
            <person name="Braun M."/>
            <person name="Brignell S.C."/>
            <person name="Bron S."/>
            <person name="Brouillet S."/>
            <person name="Bruschi C.V."/>
            <person name="Caldwell B."/>
            <person name="Capuano V."/>
            <person name="Carter N.M."/>
            <person name="Choi S.-K."/>
            <person name="Codani J.-J."/>
            <person name="Connerton I.F."/>
            <person name="Cummings N.J."/>
            <person name="Daniel R.A."/>
            <person name="Denizot F."/>
            <person name="Devine K.M."/>
            <person name="Duesterhoeft A."/>
            <person name="Ehrlich S.D."/>
            <person name="Emmerson P.T."/>
            <person name="Entian K.-D."/>
            <person name="Errington J."/>
            <person name="Fabret C."/>
            <person name="Ferrari E."/>
            <person name="Foulger D."/>
            <person name="Fritz C."/>
            <person name="Fujita M."/>
            <person name="Fujita Y."/>
            <person name="Fuma S."/>
            <person name="Galizzi A."/>
            <person name="Galleron N."/>
            <person name="Ghim S.-Y."/>
            <person name="Glaser P."/>
            <person name="Goffeau A."/>
            <person name="Golightly E.J."/>
            <person name="Grandi G."/>
            <person name="Guiseppi G."/>
            <person name="Guy B.J."/>
            <person name="Haga K."/>
            <person name="Haiech J."/>
            <person name="Harwood C.R."/>
            <person name="Henaut A."/>
            <person name="Hilbert H."/>
            <person name="Holsappel S."/>
            <person name="Hosono S."/>
            <person name="Hullo M.-F."/>
            <person name="Itaya M."/>
            <person name="Jones L.-M."/>
            <person name="Joris B."/>
            <person name="Karamata D."/>
            <person name="Kasahara Y."/>
            <person name="Klaerr-Blanchard M."/>
            <person name="Klein C."/>
            <person name="Kobayashi Y."/>
            <person name="Koetter P."/>
            <person name="Koningstein G."/>
            <person name="Krogh S."/>
            <person name="Kumano M."/>
            <person name="Kurita K."/>
            <person name="Lapidus A."/>
            <person name="Lardinois S."/>
            <person name="Lauber J."/>
            <person name="Lazarevic V."/>
            <person name="Lee S.-M."/>
            <person name="Levine A."/>
            <person name="Liu H."/>
            <person name="Masuda S."/>
            <person name="Mauel C."/>
            <person name="Medigue C."/>
            <person name="Medina N."/>
            <person name="Mellado R.P."/>
            <person name="Mizuno M."/>
            <person name="Moestl D."/>
            <person name="Nakai S."/>
            <person name="Noback M."/>
            <person name="Noone D."/>
            <person name="O'Reilly M."/>
            <person name="Ogawa K."/>
            <person name="Ogiwara A."/>
            <person name="Oudega B."/>
            <person name="Park S.-H."/>
            <person name="Parro V."/>
            <person name="Pohl T.M."/>
            <person name="Portetelle D."/>
            <person name="Porwollik S."/>
            <person name="Prescott A.M."/>
            <person name="Presecan E."/>
            <person name="Pujic P."/>
            <person name="Purnelle B."/>
            <person name="Rapoport G."/>
            <person name="Rey M."/>
            <person name="Reynolds S."/>
            <person name="Rieger M."/>
            <person name="Rivolta C."/>
            <person name="Rocha E."/>
            <person name="Roche B."/>
            <person name="Rose M."/>
            <person name="Sadaie Y."/>
            <person name="Sato T."/>
            <person name="Scanlan E."/>
            <person name="Schleich S."/>
            <person name="Schroeter R."/>
            <person name="Scoffone F."/>
            <person name="Sekiguchi J."/>
            <person name="Sekowska A."/>
            <person name="Seror S.J."/>
            <person name="Serror P."/>
            <person name="Shin B.-S."/>
            <person name="Soldo B."/>
            <person name="Sorokin A."/>
            <person name="Tacconi E."/>
            <person name="Takagi T."/>
            <person name="Takahashi H."/>
            <person name="Takemaru K."/>
            <person name="Takeuchi M."/>
            <person name="Tamakoshi A."/>
            <person name="Tanaka T."/>
            <person name="Terpstra P."/>
            <person name="Tognoni A."/>
            <person name="Tosato V."/>
            <person name="Uchiyama S."/>
            <person name="Vandenbol M."/>
            <person name="Vannier F."/>
            <person name="Vassarotti A."/>
            <person name="Viari A."/>
            <person name="Wambutt R."/>
            <person name="Wedler E."/>
            <person name="Wedler H."/>
            <person name="Weitzenegger T."/>
            <person name="Winters P."/>
            <person name="Wipat A."/>
            <person name="Yamamoto H."/>
            <person name="Yamane K."/>
            <person name="Yasumoto K."/>
            <person name="Yata K."/>
            <person name="Yoshida K."/>
            <person name="Yoshikawa H.-F."/>
            <person name="Zumstein E."/>
            <person name="Yoshikawa H."/>
            <person name="Danchin A."/>
        </authorList>
    </citation>
    <scope>NUCLEOTIDE SEQUENCE [LARGE SCALE GENOMIC DNA]</scope>
    <source>
        <strain>168</strain>
    </source>
</reference>
<protein>
    <recommendedName>
        <fullName>Putative phosphatase YkrA</fullName>
        <ecNumber>3.1.3.-</ecNumber>
    </recommendedName>
</protein>
<sequence>MDSKLIFFDIDGTIYDHDKNIPESTRKTVAELQRQGHHVFIASGRSPFLVKPILEELGIHSFISYNGQFVVFENQVIYKNPLPENAIRRLLKQADEGKHPVVFMAEDTMKATVADHPHVLEGIGSLKTDYPETDDLFYEGKEIFQLLLFCQDEEEKAYAAFPEFDLVRWHELSTDVLPHGGSKAEGIKKVIERLPFDIGDTYAFGDGLNDLQMIEYVGTGVAMGNAVPELKEIADFVTKPVDEDGIAYAVKELGLLK</sequence>
<keyword id="KW-0378">Hydrolase</keyword>
<keyword id="KW-0460">Magnesium</keyword>
<keyword id="KW-0479">Metal-binding</keyword>
<keyword id="KW-1185">Reference proteome</keyword>
<accession>Q45494</accession>
<accession>Q796J7</accession>
<comment type="cofactor">
    <cofactor evidence="1">
        <name>Mg(2+)</name>
        <dbReference type="ChEBI" id="CHEBI:18420"/>
    </cofactor>
</comment>
<comment type="similarity">
    <text evidence="2">Belongs to the HAD-like hydrolase superfamily. Cof family.</text>
</comment>
<feature type="chain" id="PRO_0000359904" description="Putative phosphatase YkrA">
    <location>
        <begin position="1"/>
        <end position="257"/>
    </location>
</feature>
<feature type="active site" description="Nucleophile" evidence="1">
    <location>
        <position position="9"/>
    </location>
</feature>
<feature type="binding site" evidence="1">
    <location>
        <position position="9"/>
    </location>
    <ligand>
        <name>Mg(2+)</name>
        <dbReference type="ChEBI" id="CHEBI:18420"/>
    </ligand>
</feature>
<feature type="binding site" evidence="1">
    <location>
        <position position="10"/>
    </location>
    <ligand>
        <name>phosphate</name>
        <dbReference type="ChEBI" id="CHEBI:43474"/>
    </ligand>
</feature>
<feature type="binding site" evidence="1">
    <location>
        <position position="11"/>
    </location>
    <ligand>
        <name>Mg(2+)</name>
        <dbReference type="ChEBI" id="CHEBI:18420"/>
    </ligand>
</feature>
<feature type="binding site" evidence="1">
    <location>
        <begin position="43"/>
        <end position="44"/>
    </location>
    <ligand>
        <name>phosphate</name>
        <dbReference type="ChEBI" id="CHEBI:43474"/>
    </ligand>
</feature>
<feature type="binding site" evidence="1">
    <location>
        <position position="183"/>
    </location>
    <ligand>
        <name>phosphate</name>
        <dbReference type="ChEBI" id="CHEBI:43474"/>
    </ligand>
</feature>
<feature type="binding site" evidence="1">
    <location>
        <position position="206"/>
    </location>
    <ligand>
        <name>Mg(2+)</name>
        <dbReference type="ChEBI" id="CHEBI:18420"/>
    </ligand>
</feature>
<feature type="binding site" evidence="1">
    <location>
        <position position="209"/>
    </location>
    <ligand>
        <name>phosphate</name>
        <dbReference type="ChEBI" id="CHEBI:43474"/>
    </ligand>
</feature>
<name>YKRA_BACSU</name>
<gene>
    <name type="primary">ykrA</name>
    <name type="ordered locus">BSU14550</name>
</gene>
<evidence type="ECO:0000250" key="1"/>
<evidence type="ECO:0000305" key="2"/>